<comment type="function">
    <text evidence="1 4 5 7">Inhibitor of cyclin-dependent kinase CDK2 (By similarity). Also acts as a component of the histone deacetylase NuRD complex which participates in the remodeling of chromatin (PubMed:16428440, PubMed:20523938, PubMed:28977666).</text>
</comment>
<comment type="subunit">
    <text evidence="1 3 5 6 8">Homodimer (PubMed:22427660). Component of the nucleosome remodeling and deacetylase (NuRD) repressor complex, composed of core proteins MTA1, MTA2, MTA3, RBBP4, RBBP7, HDAC1, HDAC2, MBD2, MBD3, and peripherally associated proteins CDK2AP1, CDK2AP2, GATAD2A, GATAD2B, CHD3, CHD4 and CHD5 (PubMed:16428440, PubMed:28977666, PubMed:33283408). The exact stoichiometry of the NuRD complex is unknown, and some subunits such as MBD2 and MBD3, GATAD2A and GATAD2B, and CHD3, CHD4 and CHD5 define mutually exclusive NuRD complexes (PubMed:16428440, PubMed:28977666, PubMed:33283408). Interacts with monomeric unphosphorylated CDK2 (By similarity). Interacts with CDK2AP2 (PubMed:14985111). Interacts with GATAD2A (PubMed:33283408). Interacts with HDAC1 (PubMed:20523938). Interacts with HDAC2 (PubMed:20523938). Interacts with MBD2 (PubMed:20523938). Interacts with MBD3 (PubMed:20523938). Interacts with RBBP4 (PubMed:20523938). Interacts with RBBP7 (PubMed:20523938).</text>
</comment>
<comment type="interaction">
    <interactant intactId="EBI-1052532">
        <id>O14519</id>
    </interactant>
    <interactant intactId="EBI-1166928">
        <id>Q8N5M1</id>
        <label>ATPAF2</label>
    </interactant>
    <organismsDiffer>false</organismsDiffer>
    <experiments>3</experiments>
</comment>
<comment type="interaction">
    <interactant intactId="EBI-1052532">
        <id>O14519</id>
    </interactant>
    <interactant intactId="EBI-11530605">
        <id>Q9H257-2</id>
        <label>CARD9</label>
    </interactant>
    <organismsDiffer>false</organismsDiffer>
    <experiments>3</experiments>
</comment>
<comment type="interaction">
    <interactant intactId="EBI-1052532">
        <id>O14519</id>
    </interactant>
    <interactant intactId="EBI-10171416">
        <id>Q96JN2-2</id>
        <label>CCDC136</label>
    </interactant>
    <organismsDiffer>false</organismsDiffer>
    <experiments>3</experiments>
</comment>
<comment type="interaction">
    <interactant intactId="EBI-1052532">
        <id>O14519</id>
    </interactant>
    <interactant intactId="EBI-348399">
        <id>P22607</id>
        <label>FGFR3</label>
    </interactant>
    <organismsDiffer>false</organismsDiffer>
    <experiments>3</experiments>
</comment>
<comment type="interaction">
    <interactant intactId="EBI-1052532">
        <id>O14519</id>
    </interactant>
    <interactant intactId="EBI-748896">
        <id>Q96HT8</id>
        <label>MRFAP1L1</label>
    </interactant>
    <organismsDiffer>false</organismsDiffer>
    <experiments>8</experiments>
</comment>
<comment type="interaction">
    <interactant intactId="EBI-1052532">
        <id>O14519</id>
    </interactant>
    <interactant intactId="EBI-741158">
        <id>Q96HA8</id>
        <label>NTAQ1</label>
    </interactant>
    <organismsDiffer>false</organismsDiffer>
    <experiments>3</experiments>
</comment>
<comment type="interaction">
    <interactant intactId="EBI-1052532">
        <id>O14519</id>
    </interactant>
    <interactant intactId="EBI-79165">
        <id>Q9NRD5</id>
        <label>PICK1</label>
    </interactant>
    <organismsDiffer>false</organismsDiffer>
    <experiments>3</experiments>
</comment>
<comment type="interaction">
    <interactant intactId="EBI-1052532">
        <id>O14519</id>
    </interactant>
    <interactant intactId="EBI-742688">
        <id>Q9NZD8</id>
        <label>SPG21</label>
    </interactant>
    <organismsDiffer>false</organismsDiffer>
    <experiments>3</experiments>
</comment>
<comment type="interaction">
    <interactant intactId="EBI-1052532">
        <id>O14519</id>
    </interactant>
    <interactant intactId="EBI-2511991">
        <id>Q9Y2K6</id>
        <label>USP20</label>
    </interactant>
    <organismsDiffer>false</organismsDiffer>
    <experiments>3</experiments>
</comment>
<comment type="subcellular location">
    <subcellularLocation>
        <location evidence="5 7 8">Nucleus</location>
    </subcellularLocation>
    <subcellularLocation>
        <location evidence="5">Chromosome</location>
    </subcellularLocation>
</comment>
<comment type="alternative products">
    <event type="alternative splicing"/>
    <isoform>
        <id>O14519-1</id>
        <name>1</name>
        <sequence type="displayed"/>
    </isoform>
    <isoform>
        <id>O14519-2</id>
        <name>2</name>
        <sequence type="described" ref="VSP_046436"/>
    </isoform>
</comment>
<comment type="PTM">
    <text evidence="6">Phosphorylated in vitro by IKBKE at Ser-46.</text>
</comment>
<comment type="similarity">
    <text evidence="10">Belongs to the CDK2AP family.</text>
</comment>
<keyword id="KW-0002">3D-structure</keyword>
<keyword id="KW-0025">Alternative splicing</keyword>
<keyword id="KW-0131">Cell cycle</keyword>
<keyword id="KW-0158">Chromosome</keyword>
<keyword id="KW-1015">Disulfide bond</keyword>
<keyword id="KW-0539">Nucleus</keyword>
<keyword id="KW-0597">Phosphoprotein</keyword>
<keyword id="KW-1267">Proteomics identification</keyword>
<keyword id="KW-1185">Reference proteome</keyword>
<keyword id="KW-0804">Transcription</keyword>
<keyword id="KW-0805">Transcription regulation</keyword>
<keyword id="KW-0043">Tumor suppressor</keyword>
<feature type="chain" id="PRO_0000089452" description="Cyclin-dependent kinase 2-associated protein 1">
    <location>
        <begin position="1"/>
        <end position="115"/>
    </location>
</feature>
<feature type="region of interest" description="Interaction with CDK2AP2" evidence="3">
    <location>
        <begin position="20"/>
        <end position="25"/>
    </location>
</feature>
<feature type="modified residue" description="Phosphoserine; by IKKE" evidence="6">
    <location>
        <position position="46"/>
    </location>
</feature>
<feature type="disulfide bond" description="Interchain" evidence="2">
    <location>
        <position position="105"/>
    </location>
</feature>
<feature type="splice variant" id="VSP_046436" description="In isoform 2." evidence="9">
    <location>
        <begin position="1"/>
        <end position="28"/>
    </location>
</feature>
<feature type="mutagenesis site" description="Does not alter homodimerization." evidence="6">
    <original>C</original>
    <variation>A</variation>
    <location>
        <position position="105"/>
    </location>
</feature>
<feature type="helix" evidence="11">
    <location>
        <begin position="62"/>
        <end position="73"/>
    </location>
</feature>
<feature type="turn" evidence="11">
    <location>
        <begin position="74"/>
        <end position="76"/>
    </location>
</feature>
<feature type="helix" evidence="11">
    <location>
        <begin position="77"/>
        <end position="81"/>
    </location>
</feature>
<feature type="helix" evidence="11">
    <location>
        <begin position="85"/>
        <end position="109"/>
    </location>
</feature>
<feature type="turn" evidence="11">
    <location>
        <begin position="110"/>
        <end position="114"/>
    </location>
</feature>
<name>CDKA1_HUMAN</name>
<organism>
    <name type="scientific">Homo sapiens</name>
    <name type="common">Human</name>
    <dbReference type="NCBI Taxonomy" id="9606"/>
    <lineage>
        <taxon>Eukaryota</taxon>
        <taxon>Metazoa</taxon>
        <taxon>Chordata</taxon>
        <taxon>Craniata</taxon>
        <taxon>Vertebrata</taxon>
        <taxon>Euteleostomi</taxon>
        <taxon>Mammalia</taxon>
        <taxon>Eutheria</taxon>
        <taxon>Euarchontoglires</taxon>
        <taxon>Primates</taxon>
        <taxon>Haplorrhini</taxon>
        <taxon>Catarrhini</taxon>
        <taxon>Hominidae</taxon>
        <taxon>Homo</taxon>
    </lineage>
</organism>
<protein>
    <recommendedName>
        <fullName>Cyclin-dependent kinase 2-associated protein 1</fullName>
        <shortName>CDK2-associated protein 1</shortName>
    </recommendedName>
    <alternativeName>
        <fullName>Deleted in oral cancer 1</fullName>
        <shortName>DOC-1</shortName>
    </alternativeName>
    <alternativeName>
        <fullName>Putative oral cancer suppressor</fullName>
    </alternativeName>
</protein>
<sequence length="115" mass="12365">MSYKPNLAAHMPAAALNAAGSVHSPSTSMATSSQYRQLLSDYGPPSLGYTQGTGNSQVPQSKYAELLAIIEELGKEIRPTYAGSKSAMERLKRGIIHARGLVRECLAETERNARS</sequence>
<evidence type="ECO:0000250" key="1">
    <source>
        <dbReference type="UniProtKB" id="O35207"/>
    </source>
</evidence>
<evidence type="ECO:0000255" key="2"/>
<evidence type="ECO:0000269" key="3">
    <source>
    </source>
</evidence>
<evidence type="ECO:0000269" key="4">
    <source>
    </source>
</evidence>
<evidence type="ECO:0000269" key="5">
    <source>
    </source>
</evidence>
<evidence type="ECO:0000269" key="6">
    <source>
    </source>
</evidence>
<evidence type="ECO:0000269" key="7">
    <source>
    </source>
</evidence>
<evidence type="ECO:0000269" key="8">
    <source>
    </source>
</evidence>
<evidence type="ECO:0000303" key="9">
    <source ref="3"/>
</evidence>
<evidence type="ECO:0000305" key="10"/>
<evidence type="ECO:0007829" key="11">
    <source>
        <dbReference type="PDB" id="2KW6"/>
    </source>
</evidence>
<gene>
    <name type="primary">CDK2AP1</name>
    <name type="synonym">CDKAP1</name>
    <name type="synonym">DOC1</name>
</gene>
<proteinExistence type="evidence at protein level"/>
<reference key="1">
    <citation type="journal article" date="1997" name="Genes Chromosomes Cancer">
        <title>Isolation, mapping and mutation analysis of a human cDNA homologous to the doc-1 gene of the Chinese hamster, a candidate tumor suppressor for oral cancer.</title>
        <authorList>
            <person name="Daigo Y."/>
            <person name="Suzuki K."/>
            <person name="Maruyama O."/>
            <person name="Miyoshi Y."/>
            <person name="Yasuda T."/>
            <person name="Kabuto T."/>
            <person name="Imaoka S."/>
            <person name="Fujiwara T."/>
            <person name="Takahashi E."/>
            <person name="Fujino M.A."/>
            <person name="Nakamura Y."/>
        </authorList>
    </citation>
    <scope>NUCLEOTIDE SEQUENCE [MRNA] (ISOFORM 1)</scope>
</reference>
<reference key="2">
    <citation type="journal article" date="1998" name="J. Biol. Chem.">
        <title>Cloning, mapping, expression, function, and mutation analyses of the human ortholog of the hamster putative tumor suppressor gene Doc-1.</title>
        <authorList>
            <person name="Tsuji T."/>
            <person name="Duh F.-M."/>
            <person name="Latif F."/>
            <person name="Popescu N.C."/>
            <person name="Zimonjic D.B."/>
            <person name="McBride J."/>
            <person name="Matsuo K."/>
            <person name="Ohyama H."/>
            <person name="Todd R."/>
            <person name="Nagata E."/>
            <person name="Terakado N."/>
            <person name="Sasaki A."/>
            <person name="Matsumura T."/>
            <person name="Lerman M.I."/>
            <person name="Wong D.T."/>
        </authorList>
    </citation>
    <scope>NUCLEOTIDE SEQUENCE [MRNA] (ISOFORM 1)</scope>
    <source>
        <tissue>Testis</tissue>
    </source>
</reference>
<reference key="3">
    <citation type="submission" date="2006-03" db="EMBL/GenBank/DDBJ databases">
        <authorList>
            <person name="Arakawa T."/>
            <person name="Carninci P."/>
            <person name="Fukuda S."/>
            <person name="Hasegawa A."/>
            <person name="Hayashida K."/>
            <person name="Hori F."/>
            <person name="Kai C."/>
            <person name="Kawai J."/>
            <person name="Kojima M."/>
            <person name="Murata M."/>
            <person name="Nakamura M."/>
            <person name="Nishiyori H."/>
            <person name="Nomura K."/>
            <person name="Ohno M."/>
            <person name="Sasaki D."/>
            <person name="Shibazaki E."/>
            <person name="Tagami M."/>
            <person name="Tagami Y."/>
            <person name="Hayashizaki Y."/>
        </authorList>
    </citation>
    <scope>NUCLEOTIDE SEQUENCE [LARGE SCALE MRNA] (ISOFORM 2)</scope>
</reference>
<reference key="4">
    <citation type="journal article" date="2006" name="Nature">
        <title>The finished DNA sequence of human chromosome 12.</title>
        <authorList>
            <person name="Scherer S.E."/>
            <person name="Muzny D.M."/>
            <person name="Buhay C.J."/>
            <person name="Chen R."/>
            <person name="Cree A."/>
            <person name="Ding Y."/>
            <person name="Dugan-Rocha S."/>
            <person name="Gill R."/>
            <person name="Gunaratne P."/>
            <person name="Harris R.A."/>
            <person name="Hawes A.C."/>
            <person name="Hernandez J."/>
            <person name="Hodgson A.V."/>
            <person name="Hume J."/>
            <person name="Jackson A."/>
            <person name="Khan Z.M."/>
            <person name="Kovar-Smith C."/>
            <person name="Lewis L.R."/>
            <person name="Lozado R.J."/>
            <person name="Metzker M.L."/>
            <person name="Milosavljevic A."/>
            <person name="Miner G.R."/>
            <person name="Montgomery K.T."/>
            <person name="Morgan M.B."/>
            <person name="Nazareth L.V."/>
            <person name="Scott G."/>
            <person name="Sodergren E."/>
            <person name="Song X.-Z."/>
            <person name="Steffen D."/>
            <person name="Lovering R.C."/>
            <person name="Wheeler D.A."/>
            <person name="Worley K.C."/>
            <person name="Yuan Y."/>
            <person name="Zhang Z."/>
            <person name="Adams C.Q."/>
            <person name="Ansari-Lari M.A."/>
            <person name="Ayele M."/>
            <person name="Brown M.J."/>
            <person name="Chen G."/>
            <person name="Chen Z."/>
            <person name="Clerc-Blankenburg K.P."/>
            <person name="Davis C."/>
            <person name="Delgado O."/>
            <person name="Dinh H.H."/>
            <person name="Draper H."/>
            <person name="Gonzalez-Garay M.L."/>
            <person name="Havlak P."/>
            <person name="Jackson L.R."/>
            <person name="Jacob L.S."/>
            <person name="Kelly S.H."/>
            <person name="Li L."/>
            <person name="Li Z."/>
            <person name="Liu J."/>
            <person name="Liu W."/>
            <person name="Lu J."/>
            <person name="Maheshwari M."/>
            <person name="Nguyen B.-V."/>
            <person name="Okwuonu G.O."/>
            <person name="Pasternak S."/>
            <person name="Perez L.M."/>
            <person name="Plopper F.J.H."/>
            <person name="Santibanez J."/>
            <person name="Shen H."/>
            <person name="Tabor P.E."/>
            <person name="Verduzco D."/>
            <person name="Waldron L."/>
            <person name="Wang Q."/>
            <person name="Williams G.A."/>
            <person name="Zhang J."/>
            <person name="Zhou J."/>
            <person name="Allen C.C."/>
            <person name="Amin A.G."/>
            <person name="Anyalebechi V."/>
            <person name="Bailey M."/>
            <person name="Barbaria J.A."/>
            <person name="Bimage K.E."/>
            <person name="Bryant N.P."/>
            <person name="Burch P.E."/>
            <person name="Burkett C.E."/>
            <person name="Burrell K.L."/>
            <person name="Calderon E."/>
            <person name="Cardenas V."/>
            <person name="Carter K."/>
            <person name="Casias K."/>
            <person name="Cavazos I."/>
            <person name="Cavazos S.R."/>
            <person name="Ceasar H."/>
            <person name="Chacko J."/>
            <person name="Chan S.N."/>
            <person name="Chavez D."/>
            <person name="Christopoulos C."/>
            <person name="Chu J."/>
            <person name="Cockrell R."/>
            <person name="Cox C.D."/>
            <person name="Dang M."/>
            <person name="Dathorne S.R."/>
            <person name="David R."/>
            <person name="Davis C.M."/>
            <person name="Davy-Carroll L."/>
            <person name="Deshazo D.R."/>
            <person name="Donlin J.E."/>
            <person name="D'Souza L."/>
            <person name="Eaves K.A."/>
            <person name="Egan A."/>
            <person name="Emery-Cohen A.J."/>
            <person name="Escotto M."/>
            <person name="Flagg N."/>
            <person name="Forbes L.D."/>
            <person name="Gabisi A.M."/>
            <person name="Garza M."/>
            <person name="Hamilton C."/>
            <person name="Henderson N."/>
            <person name="Hernandez O."/>
            <person name="Hines S."/>
            <person name="Hogues M.E."/>
            <person name="Huang M."/>
            <person name="Idlebird D.G."/>
            <person name="Johnson R."/>
            <person name="Jolivet A."/>
            <person name="Jones S."/>
            <person name="Kagan R."/>
            <person name="King L.M."/>
            <person name="Leal B."/>
            <person name="Lebow H."/>
            <person name="Lee S."/>
            <person name="LeVan J.M."/>
            <person name="Lewis L.C."/>
            <person name="London P."/>
            <person name="Lorensuhewa L.M."/>
            <person name="Loulseged H."/>
            <person name="Lovett D.A."/>
            <person name="Lucier A."/>
            <person name="Lucier R.L."/>
            <person name="Ma J."/>
            <person name="Madu R.C."/>
            <person name="Mapua P."/>
            <person name="Martindale A.D."/>
            <person name="Martinez E."/>
            <person name="Massey E."/>
            <person name="Mawhiney S."/>
            <person name="Meador M.G."/>
            <person name="Mendez S."/>
            <person name="Mercado C."/>
            <person name="Mercado I.C."/>
            <person name="Merritt C.E."/>
            <person name="Miner Z.L."/>
            <person name="Minja E."/>
            <person name="Mitchell T."/>
            <person name="Mohabbat F."/>
            <person name="Mohabbat K."/>
            <person name="Montgomery B."/>
            <person name="Moore N."/>
            <person name="Morris S."/>
            <person name="Munidasa M."/>
            <person name="Ngo R.N."/>
            <person name="Nguyen N.B."/>
            <person name="Nickerson E."/>
            <person name="Nwaokelemeh O.O."/>
            <person name="Nwokenkwo S."/>
            <person name="Obregon M."/>
            <person name="Oguh M."/>
            <person name="Oragunye N."/>
            <person name="Oviedo R.J."/>
            <person name="Parish B.J."/>
            <person name="Parker D.N."/>
            <person name="Parrish J."/>
            <person name="Parks K.L."/>
            <person name="Paul H.A."/>
            <person name="Payton B.A."/>
            <person name="Perez A."/>
            <person name="Perrin W."/>
            <person name="Pickens A."/>
            <person name="Primus E.L."/>
            <person name="Pu L.-L."/>
            <person name="Puazo M."/>
            <person name="Quiles M.M."/>
            <person name="Quiroz J.B."/>
            <person name="Rabata D."/>
            <person name="Reeves K."/>
            <person name="Ruiz S.J."/>
            <person name="Shao H."/>
            <person name="Sisson I."/>
            <person name="Sonaike T."/>
            <person name="Sorelle R.P."/>
            <person name="Sutton A.E."/>
            <person name="Svatek A.F."/>
            <person name="Svetz L.A."/>
            <person name="Tamerisa K.S."/>
            <person name="Taylor T.R."/>
            <person name="Teague B."/>
            <person name="Thomas N."/>
            <person name="Thorn R.D."/>
            <person name="Trejos Z.Y."/>
            <person name="Trevino B.K."/>
            <person name="Ukegbu O.N."/>
            <person name="Urban J.B."/>
            <person name="Vasquez L.I."/>
            <person name="Vera V.A."/>
            <person name="Villasana D.M."/>
            <person name="Wang L."/>
            <person name="Ward-Moore S."/>
            <person name="Warren J.T."/>
            <person name="Wei X."/>
            <person name="White F."/>
            <person name="Williamson A.L."/>
            <person name="Wleczyk R."/>
            <person name="Wooden H.S."/>
            <person name="Wooden S.H."/>
            <person name="Yen J."/>
            <person name="Yoon L."/>
            <person name="Yoon V."/>
            <person name="Zorrilla S.E."/>
            <person name="Nelson D."/>
            <person name="Kucherlapati R."/>
            <person name="Weinstock G."/>
            <person name="Gibbs R.A."/>
        </authorList>
    </citation>
    <scope>NUCLEOTIDE SEQUENCE [LARGE SCALE GENOMIC DNA]</scope>
</reference>
<reference key="5">
    <citation type="journal article" date="2004" name="Genome Res.">
        <title>The status, quality, and expansion of the NIH full-length cDNA project: the Mammalian Gene Collection (MGC).</title>
        <authorList>
            <consortium name="The MGC Project Team"/>
        </authorList>
    </citation>
    <scope>NUCLEOTIDE SEQUENCE [LARGE SCALE MRNA] (ISOFORM 1)</scope>
    <source>
        <tissue>Skin</tissue>
    </source>
</reference>
<reference key="6">
    <citation type="journal article" date="2004" name="Biochem. Biophys. Res. Commun.">
        <title>Interaction of the CDK2-associated protein-1, p12(DOC-1/CDK2AP1), with its homolog, p14(DOC-1R).</title>
        <authorList>
            <person name="Buajeeb W."/>
            <person name="Zhang X."/>
            <person name="Ohyama H."/>
            <person name="Han D."/>
            <person name="Surarit R."/>
            <person name="Kim Y."/>
            <person name="Wong D.T."/>
        </authorList>
    </citation>
    <scope>INTERACTION WITH CDK2AP2</scope>
</reference>
<reference key="7">
    <citation type="journal article" date="2006" name="Mol. Cell. Biol.">
        <title>MBD2/NuRD and MBD3/NuRD, two distinct complexes with different biochemical and functional properties.</title>
        <authorList>
            <person name="Le Guezennec X."/>
            <person name="Vermeulen M."/>
            <person name="Brinkman A.B."/>
            <person name="Hoeijmakers W.A."/>
            <person name="Cohen A."/>
            <person name="Lasonder E."/>
            <person name="Stunnenberg H.G."/>
        </authorList>
    </citation>
    <scope>FUNCTION</scope>
    <scope>IDENTIFICATION IN THE NURD COMPLEX</scope>
    <scope>IDENTIFICATION BY MASS SPECTROMETRY</scope>
</reference>
<reference key="8">
    <citation type="journal article" date="2010" name="Mol. Biosyst.">
        <title>CDK2AP1/DOC-1 is a bona fide subunit of the Mi-2/NuRD complex.</title>
        <authorList>
            <person name="Spruijt C.G."/>
            <person name="Bartels S.J."/>
            <person name="Brinkman A.B."/>
            <person name="Tjeertes J.V."/>
            <person name="Poser I."/>
            <person name="Stunnenberg H.G."/>
            <person name="Vermeulen M."/>
        </authorList>
    </citation>
    <scope>FUNCTION</scope>
    <scope>IDENTIFICATION IN THE NURD COMPLEX</scope>
    <scope>INTERACTION WITH HDAC1; HDAC2; RBBP4; RBBP7; MBD2 AND MBD3</scope>
    <scope>IDENTIFICATION BY MASS SPECTROMETRY</scope>
    <scope>SUBCELLULAR LOCATION</scope>
</reference>
<reference key="9">
    <citation type="journal article" date="2017" name="Nucleic Acids Res.">
        <title>CHD3 and CHD4 form distinct NuRD complexes with different yet overlapping functionality.</title>
        <authorList>
            <person name="Hoffmeister H."/>
            <person name="Fuchs A."/>
            <person name="Erdel F."/>
            <person name="Pinz S."/>
            <person name="Groebner-Ferreira R."/>
            <person name="Bruckmann A."/>
            <person name="Deutzmann R."/>
            <person name="Schwartz U."/>
            <person name="Maldonado R."/>
            <person name="Huber C."/>
            <person name="Dendorfer A.S."/>
            <person name="Rippe K."/>
            <person name="Laengst G."/>
        </authorList>
    </citation>
    <scope>FUNCTION</scope>
    <scope>IDENTIFICATION IN THE NURD COMPLEX</scope>
    <scope>IDENTIFICATION BY MASS SPECTROMETRY</scope>
    <scope>SUBCELLULAR LOCATION</scope>
</reference>
<reference key="10">
    <citation type="journal article" date="2021" name="FEBS J.">
        <title>Cross-linking mass spectrometry reveals the structural topology of peripheral NuRD subunits relative to the core complex.</title>
        <authorList>
            <person name="Spruijt C.G."/>
            <person name="Graewe C."/>
            <person name="Kleinendorst S.C."/>
            <person name="Baltissen M.P.A."/>
            <person name="Vermeulen M."/>
        </authorList>
    </citation>
    <scope>IDENTIFICATION IN THE NURD COMPLEX</scope>
    <scope>INTERACTION WITH GATAD2A</scope>
    <scope>IDENTIFICATION BY MASS SPECTROMETRY</scope>
    <scope>SUBCELLULAR LOCATION</scope>
</reference>
<reference key="11">
    <citation type="journal article" date="2012" name="J. Biol. Chem.">
        <title>Human cyclin-dependent kinase 2-associated protein 1 (CDK2AP1) is dimeric in its disulfide-reduced state, with natively disordered N-terminal region.</title>
        <authorList>
            <person name="Ertekin A."/>
            <person name="Aramini J.M."/>
            <person name="Rossi P."/>
            <person name="Leonard P.G."/>
            <person name="Janjua H."/>
            <person name="Xiao R."/>
            <person name="Maglaqui M."/>
            <person name="Lee H.W."/>
            <person name="Prestegard J.H."/>
            <person name="Montelione G.T."/>
        </authorList>
    </citation>
    <scope>STRUCTURE BY NMR OF 61-115</scope>
    <scope>SUBUNIT</scope>
    <scope>PHOSPHORYLATION AT SER-46</scope>
    <scope>DISULFIDE BOND</scope>
    <scope>MUTAGENESIS OF CYS-105</scope>
</reference>
<dbReference type="EMBL" id="AB006077">
    <property type="protein sequence ID" value="BAA22937.1"/>
    <property type="molecule type" value="mRNA"/>
</dbReference>
<dbReference type="EMBL" id="AF006484">
    <property type="protein sequence ID" value="AAC77831.1"/>
    <property type="molecule type" value="mRNA"/>
</dbReference>
<dbReference type="EMBL" id="DB465022">
    <property type="status" value="NOT_ANNOTATED_CDS"/>
    <property type="molecule type" value="mRNA"/>
</dbReference>
<dbReference type="EMBL" id="AC068768">
    <property type="status" value="NOT_ANNOTATED_CDS"/>
    <property type="molecule type" value="Genomic_DNA"/>
</dbReference>
<dbReference type="EMBL" id="BC034717">
    <property type="protein sequence ID" value="AAH34717.1"/>
    <property type="molecule type" value="mRNA"/>
</dbReference>
<dbReference type="CCDS" id="CCDS58289.1">
    <molecule id="O14519-2"/>
</dbReference>
<dbReference type="CCDS" id="CCDS9245.1">
    <molecule id="O14519-1"/>
</dbReference>
<dbReference type="RefSeq" id="NP_001257362.1">
    <molecule id="O14519-2"/>
    <property type="nucleotide sequence ID" value="NM_001270433.2"/>
</dbReference>
<dbReference type="RefSeq" id="NP_001257363.1">
    <molecule id="O14519-2"/>
    <property type="nucleotide sequence ID" value="NM_001270434.2"/>
</dbReference>
<dbReference type="RefSeq" id="NP_004633.1">
    <molecule id="O14519-1"/>
    <property type="nucleotide sequence ID" value="NM_004642.4"/>
</dbReference>
<dbReference type="PDB" id="2KW6">
    <property type="method" value="NMR"/>
    <property type="chains" value="A/B=61-115"/>
</dbReference>
<dbReference type="PDBsum" id="2KW6"/>
<dbReference type="SMR" id="O14519"/>
<dbReference type="BioGRID" id="113770">
    <property type="interactions" value="122"/>
</dbReference>
<dbReference type="CORUM" id="O14519"/>
<dbReference type="FunCoup" id="O14519">
    <property type="interactions" value="1840"/>
</dbReference>
<dbReference type="IntAct" id="O14519">
    <property type="interactions" value="66"/>
</dbReference>
<dbReference type="MINT" id="O14519"/>
<dbReference type="STRING" id="9606.ENSP00000261692"/>
<dbReference type="BindingDB" id="O14519"/>
<dbReference type="ChEMBL" id="CHEMBL5578"/>
<dbReference type="GlyGen" id="O14519">
    <property type="glycosylation" value="2 sites, 1 O-linked glycan (2 sites)"/>
</dbReference>
<dbReference type="iPTMnet" id="O14519"/>
<dbReference type="PhosphoSitePlus" id="O14519"/>
<dbReference type="BioMuta" id="CDK2AP1"/>
<dbReference type="jPOST" id="O14519"/>
<dbReference type="MassIVE" id="O14519"/>
<dbReference type="PaxDb" id="9606-ENSP00000261692"/>
<dbReference type="PeptideAtlas" id="O14519"/>
<dbReference type="ProteomicsDB" id="24675"/>
<dbReference type="ProteomicsDB" id="48062">
    <molecule id="O14519-1"/>
</dbReference>
<dbReference type="Pumba" id="O14519"/>
<dbReference type="Antibodypedia" id="31773">
    <property type="antibodies" value="203 antibodies from 27 providers"/>
</dbReference>
<dbReference type="DNASU" id="8099"/>
<dbReference type="Ensembl" id="ENST00000261692.7">
    <molecule id="O14519-1"/>
    <property type="protein sequence ID" value="ENSP00000261692.2"/>
    <property type="gene ID" value="ENSG00000111328.7"/>
</dbReference>
<dbReference type="Ensembl" id="ENST00000535979.5">
    <molecule id="O14519-2"/>
    <property type="protein sequence ID" value="ENSP00000442565.1"/>
    <property type="gene ID" value="ENSG00000111328.7"/>
</dbReference>
<dbReference type="Ensembl" id="ENST00000538446.5">
    <molecule id="O14519-2"/>
    <property type="protein sequence ID" value="ENSP00000442502.1"/>
    <property type="gene ID" value="ENSG00000111328.7"/>
</dbReference>
<dbReference type="Ensembl" id="ENST00000542174.5">
    <molecule id="O14519-2"/>
    <property type="protein sequence ID" value="ENSP00000440729.1"/>
    <property type="gene ID" value="ENSG00000111328.7"/>
</dbReference>
<dbReference type="Ensembl" id="ENST00000544658.5">
    <molecule id="O14519-2"/>
    <property type="protein sequence ID" value="ENSP00000438561.1"/>
    <property type="gene ID" value="ENSG00000111328.7"/>
</dbReference>
<dbReference type="Ensembl" id="ENST00000618072.4">
    <molecule id="O14519-2"/>
    <property type="protein sequence ID" value="ENSP00000479982.1"/>
    <property type="gene ID" value="ENSG00000111328.7"/>
</dbReference>
<dbReference type="Ensembl" id="ENST00000652466.1">
    <molecule id="O14519-2"/>
    <property type="protein sequence ID" value="ENSP00000498286.1"/>
    <property type="gene ID" value="ENSG00000111328.7"/>
</dbReference>
<dbReference type="GeneID" id="8099"/>
<dbReference type="KEGG" id="hsa:8099"/>
<dbReference type="MANE-Select" id="ENST00000261692.7">
    <property type="protein sequence ID" value="ENSP00000261692.2"/>
    <property type="RefSeq nucleotide sequence ID" value="NM_004642.4"/>
    <property type="RefSeq protein sequence ID" value="NP_004633.1"/>
</dbReference>
<dbReference type="UCSC" id="uc001ueq.5">
    <molecule id="O14519-1"/>
    <property type="organism name" value="human"/>
</dbReference>
<dbReference type="AGR" id="HGNC:14002"/>
<dbReference type="CTD" id="8099"/>
<dbReference type="DisGeNET" id="8099"/>
<dbReference type="GeneCards" id="CDK2AP1"/>
<dbReference type="HGNC" id="HGNC:14002">
    <property type="gene designation" value="CDK2AP1"/>
</dbReference>
<dbReference type="HPA" id="ENSG00000111328">
    <property type="expression patterns" value="Tissue enhanced (brain)"/>
</dbReference>
<dbReference type="MIM" id="602198">
    <property type="type" value="gene"/>
</dbReference>
<dbReference type="neXtProt" id="NX_O14519"/>
<dbReference type="OpenTargets" id="ENSG00000111328"/>
<dbReference type="PharmGKB" id="PA26308"/>
<dbReference type="VEuPathDB" id="HostDB:ENSG00000111328"/>
<dbReference type="eggNOG" id="KOG4713">
    <property type="taxonomic scope" value="Eukaryota"/>
</dbReference>
<dbReference type="GeneTree" id="ENSGT00940000155149"/>
<dbReference type="HOGENOM" id="CLU_130479_1_0_1"/>
<dbReference type="InParanoid" id="O14519"/>
<dbReference type="OMA" id="WMIYCIV"/>
<dbReference type="OrthoDB" id="9628807at2759"/>
<dbReference type="PAN-GO" id="O14519">
    <property type="GO annotations" value="2 GO annotations based on evolutionary models"/>
</dbReference>
<dbReference type="PhylomeDB" id="O14519"/>
<dbReference type="TreeFam" id="TF101037"/>
<dbReference type="PathwayCommons" id="O14519"/>
<dbReference type="SignaLink" id="O14519"/>
<dbReference type="SIGNOR" id="O14519"/>
<dbReference type="BioGRID-ORCS" id="8099">
    <property type="hits" value="28 hits in 1156 CRISPR screens"/>
</dbReference>
<dbReference type="ChiTaRS" id="CDK2AP1">
    <property type="organism name" value="human"/>
</dbReference>
<dbReference type="EvolutionaryTrace" id="O14519"/>
<dbReference type="GeneWiki" id="CDK2AP1"/>
<dbReference type="GenomeRNAi" id="8099"/>
<dbReference type="Pharos" id="O14519">
    <property type="development level" value="Tbio"/>
</dbReference>
<dbReference type="PRO" id="PR:O14519"/>
<dbReference type="Proteomes" id="UP000005640">
    <property type="component" value="Chromosome 12"/>
</dbReference>
<dbReference type="RNAct" id="O14519">
    <property type="molecule type" value="protein"/>
</dbReference>
<dbReference type="Bgee" id="ENSG00000111328">
    <property type="expression patterns" value="Expressed in parotid gland and 217 other cell types or tissues"/>
</dbReference>
<dbReference type="ExpressionAtlas" id="O14519">
    <property type="expression patterns" value="baseline and differential"/>
</dbReference>
<dbReference type="GO" id="GO:0000785">
    <property type="term" value="C:chromatin"/>
    <property type="evidence" value="ECO:0000314"/>
    <property type="project" value="UniProtKB"/>
</dbReference>
<dbReference type="GO" id="GO:0005737">
    <property type="term" value="C:cytoplasm"/>
    <property type="evidence" value="ECO:0000318"/>
    <property type="project" value="GO_Central"/>
</dbReference>
<dbReference type="GO" id="GO:0005829">
    <property type="term" value="C:cytosol"/>
    <property type="evidence" value="ECO:0000314"/>
    <property type="project" value="HPA"/>
</dbReference>
<dbReference type="GO" id="GO:0005654">
    <property type="term" value="C:nucleoplasm"/>
    <property type="evidence" value="ECO:0000314"/>
    <property type="project" value="HPA"/>
</dbReference>
<dbReference type="GO" id="GO:0005634">
    <property type="term" value="C:nucleus"/>
    <property type="evidence" value="ECO:0000314"/>
    <property type="project" value="UniProtKB"/>
</dbReference>
<dbReference type="GO" id="GO:0016581">
    <property type="term" value="C:NuRD complex"/>
    <property type="evidence" value="ECO:0000314"/>
    <property type="project" value="UniProtKB"/>
</dbReference>
<dbReference type="GO" id="GO:0048471">
    <property type="term" value="C:perinuclear region of cytoplasm"/>
    <property type="evidence" value="ECO:0000314"/>
    <property type="project" value="UniProtKB"/>
</dbReference>
<dbReference type="GO" id="GO:0070182">
    <property type="term" value="F:DNA polymerase binding"/>
    <property type="evidence" value="ECO:0000353"/>
    <property type="project" value="UniProtKB"/>
</dbReference>
<dbReference type="GO" id="GO:0006261">
    <property type="term" value="P:DNA-templated DNA replication"/>
    <property type="evidence" value="ECO:0000303"/>
    <property type="project" value="UniProtKB"/>
</dbReference>
<dbReference type="GO" id="GO:0001934">
    <property type="term" value="P:positive regulation of protein phosphorylation"/>
    <property type="evidence" value="ECO:0000314"/>
    <property type="project" value="UniProtKB"/>
</dbReference>
<dbReference type="GO" id="GO:0006357">
    <property type="term" value="P:regulation of transcription by RNA polymerase II"/>
    <property type="evidence" value="ECO:0000314"/>
    <property type="project" value="UniProtKB"/>
</dbReference>
<dbReference type="DisProt" id="DP01303"/>
<dbReference type="Gene3D" id="6.10.140.1300">
    <property type="match status" value="1"/>
</dbReference>
<dbReference type="InterPro" id="IPR017266">
    <property type="entry name" value="DOC_1/2"/>
</dbReference>
<dbReference type="PANTHER" id="PTHR22607:SF2">
    <property type="entry name" value="CYCLIN-DEPENDENT KINASE 2-ASSOCIATED PROTEIN 1"/>
    <property type="match status" value="1"/>
</dbReference>
<dbReference type="PANTHER" id="PTHR22607">
    <property type="entry name" value="DELETED IN ORAL CANCER 1/CDK2-ASSOCIATED PROTEIN 1"/>
    <property type="match status" value="1"/>
</dbReference>
<dbReference type="Pfam" id="PF09806">
    <property type="entry name" value="CDK2AP"/>
    <property type="match status" value="1"/>
</dbReference>
<dbReference type="PIRSF" id="PIRSF037709">
    <property type="entry name" value="CDK2-associated_p2"/>
    <property type="match status" value="1"/>
</dbReference>
<accession>O14519</accession>
<accession>F5GYA4</accession>